<keyword id="KW-0095">Blood group antigen</keyword>
<keyword id="KW-1003">Cell membrane</keyword>
<keyword id="KW-0963">Cytoplasm</keyword>
<keyword id="KW-1015">Disulfide bond</keyword>
<keyword id="KW-0325">Glycoprotein</keyword>
<keyword id="KW-0393">Immunoglobulin domain</keyword>
<keyword id="KW-0472">Membrane</keyword>
<keyword id="KW-0597">Phosphoprotein</keyword>
<keyword id="KW-1267">Proteomics identification</keyword>
<keyword id="KW-1185">Reference proteome</keyword>
<keyword id="KW-0732">Signal</keyword>
<keyword id="KW-0812">Transmembrane</keyword>
<keyword id="KW-1133">Transmembrane helix</keyword>
<name>ERMAP_HUMAN</name>
<reference key="1">
    <citation type="journal article" date="2001" name="Blood Cells Mol. Dis.">
        <title>Human ERMAP: an erythroid adhesion/receptor transmembrane protein.</title>
        <authorList>
            <person name="Su Y.-Y."/>
            <person name="Gordon C.T."/>
            <person name="Ye T.-Z."/>
            <person name="Perkins A.C."/>
            <person name="Chui D.H.K."/>
        </authorList>
    </citation>
    <scope>NUCLEOTIDE SEQUENCE [MRNA]</scope>
    <scope>TISSUE SPECIFICITY</scope>
    <scope>DEVELOPMENTAL STAGE</scope>
    <source>
        <tissue>Fetal liver</tissue>
    </source>
</reference>
<reference key="2">
    <citation type="journal article" date="2001" name="Genomics">
        <title>Cloning and characterization of human erythroid membrane-associated protein, human ERMAP.</title>
        <authorList>
            <person name="Xu H."/>
            <person name="Foltz L."/>
            <person name="Sha Y."/>
            <person name="Madlansacay M.R."/>
            <person name="Cain C."/>
            <person name="Lindemann G."/>
            <person name="Vargas J."/>
            <person name="Nagy D."/>
            <person name="Harriman B."/>
            <person name="Mahoney W."/>
            <person name="Schueler P.A."/>
        </authorList>
    </citation>
    <scope>NUCLEOTIDE SEQUENCE [MRNA]</scope>
    <scope>TISSUE SPECIFICITY</scope>
    <scope>DEVELOPMENTAL STAGE</scope>
    <scope>SUBCELLULAR LOCATION</scope>
    <source>
        <tissue>Fetal liver</tissue>
    </source>
</reference>
<reference key="3">
    <citation type="journal article" date="2003" name="Blood">
        <title>Scianna antigens including Rd are expressed by ERMAP.</title>
        <authorList>
            <person name="Wagner F.F."/>
            <person name="Poole J."/>
            <person name="Flegel W.A."/>
        </authorList>
    </citation>
    <scope>NUCLEOTIDE SEQUENCE [GENOMIC DNA] (ALLELE SC-3)</scope>
    <scope>POLYMORPHISM</scope>
    <scope>VARIANTS TYR-26; ARG-57 AND ALA-60</scope>
</reference>
<reference key="4">
    <citation type="journal article" date="2007" name="BMC Genomics">
        <title>The full-ORF clone resource of the German cDNA consortium.</title>
        <authorList>
            <person name="Bechtel S."/>
            <person name="Rosenfelder H."/>
            <person name="Duda A."/>
            <person name="Schmidt C.P."/>
            <person name="Ernst U."/>
            <person name="Wellenreuther R."/>
            <person name="Mehrle A."/>
            <person name="Schuster C."/>
            <person name="Bahr A."/>
            <person name="Bloecker H."/>
            <person name="Heubner D."/>
            <person name="Hoerlein A."/>
            <person name="Michel G."/>
            <person name="Wedler H."/>
            <person name="Koehrer K."/>
            <person name="Ottenwaelder B."/>
            <person name="Poustka A."/>
            <person name="Wiemann S."/>
            <person name="Schupp I."/>
        </authorList>
    </citation>
    <scope>NUCLEOTIDE SEQUENCE [LARGE SCALE MRNA]</scope>
    <source>
        <tissue>Uterus</tissue>
    </source>
</reference>
<reference key="5">
    <citation type="submission" date="2005-06" db="EMBL/GenBank/DDBJ databases">
        <authorList>
            <consortium name="SeattleSNPs variation discovery resource"/>
        </authorList>
    </citation>
    <scope>NUCLEOTIDE SEQUENCE [GENOMIC DNA]</scope>
    <scope>VARIANTS VAL-4; TYR-26; ARG-259 AND GLU-263</scope>
</reference>
<reference key="6">
    <citation type="journal article" date="2006" name="Nature">
        <title>The DNA sequence and biological annotation of human chromosome 1.</title>
        <authorList>
            <person name="Gregory S.G."/>
            <person name="Barlow K.F."/>
            <person name="McLay K.E."/>
            <person name="Kaul R."/>
            <person name="Swarbreck D."/>
            <person name="Dunham A."/>
            <person name="Scott C.E."/>
            <person name="Howe K.L."/>
            <person name="Woodfine K."/>
            <person name="Spencer C.C.A."/>
            <person name="Jones M.C."/>
            <person name="Gillson C."/>
            <person name="Searle S."/>
            <person name="Zhou Y."/>
            <person name="Kokocinski F."/>
            <person name="McDonald L."/>
            <person name="Evans R."/>
            <person name="Phillips K."/>
            <person name="Atkinson A."/>
            <person name="Cooper R."/>
            <person name="Jones C."/>
            <person name="Hall R.E."/>
            <person name="Andrews T.D."/>
            <person name="Lloyd C."/>
            <person name="Ainscough R."/>
            <person name="Almeida J.P."/>
            <person name="Ambrose K.D."/>
            <person name="Anderson F."/>
            <person name="Andrew R.W."/>
            <person name="Ashwell R.I.S."/>
            <person name="Aubin K."/>
            <person name="Babbage A.K."/>
            <person name="Bagguley C.L."/>
            <person name="Bailey J."/>
            <person name="Beasley H."/>
            <person name="Bethel G."/>
            <person name="Bird C.P."/>
            <person name="Bray-Allen S."/>
            <person name="Brown J.Y."/>
            <person name="Brown A.J."/>
            <person name="Buckley D."/>
            <person name="Burton J."/>
            <person name="Bye J."/>
            <person name="Carder C."/>
            <person name="Chapman J.C."/>
            <person name="Clark S.Y."/>
            <person name="Clarke G."/>
            <person name="Clee C."/>
            <person name="Cobley V."/>
            <person name="Collier R.E."/>
            <person name="Corby N."/>
            <person name="Coville G.J."/>
            <person name="Davies J."/>
            <person name="Deadman R."/>
            <person name="Dunn M."/>
            <person name="Earthrowl M."/>
            <person name="Ellington A.G."/>
            <person name="Errington H."/>
            <person name="Frankish A."/>
            <person name="Frankland J."/>
            <person name="French L."/>
            <person name="Garner P."/>
            <person name="Garnett J."/>
            <person name="Gay L."/>
            <person name="Ghori M.R.J."/>
            <person name="Gibson R."/>
            <person name="Gilby L.M."/>
            <person name="Gillett W."/>
            <person name="Glithero R.J."/>
            <person name="Grafham D.V."/>
            <person name="Griffiths C."/>
            <person name="Griffiths-Jones S."/>
            <person name="Grocock R."/>
            <person name="Hammond S."/>
            <person name="Harrison E.S.I."/>
            <person name="Hart E."/>
            <person name="Haugen E."/>
            <person name="Heath P.D."/>
            <person name="Holmes S."/>
            <person name="Holt K."/>
            <person name="Howden P.J."/>
            <person name="Hunt A.R."/>
            <person name="Hunt S.E."/>
            <person name="Hunter G."/>
            <person name="Isherwood J."/>
            <person name="James R."/>
            <person name="Johnson C."/>
            <person name="Johnson D."/>
            <person name="Joy A."/>
            <person name="Kay M."/>
            <person name="Kershaw J.K."/>
            <person name="Kibukawa M."/>
            <person name="Kimberley A.M."/>
            <person name="King A."/>
            <person name="Knights A.J."/>
            <person name="Lad H."/>
            <person name="Laird G."/>
            <person name="Lawlor S."/>
            <person name="Leongamornlert D.A."/>
            <person name="Lloyd D.M."/>
            <person name="Loveland J."/>
            <person name="Lovell J."/>
            <person name="Lush M.J."/>
            <person name="Lyne R."/>
            <person name="Martin S."/>
            <person name="Mashreghi-Mohammadi M."/>
            <person name="Matthews L."/>
            <person name="Matthews N.S.W."/>
            <person name="McLaren S."/>
            <person name="Milne S."/>
            <person name="Mistry S."/>
            <person name="Moore M.J.F."/>
            <person name="Nickerson T."/>
            <person name="O'Dell C.N."/>
            <person name="Oliver K."/>
            <person name="Palmeiri A."/>
            <person name="Palmer S.A."/>
            <person name="Parker A."/>
            <person name="Patel D."/>
            <person name="Pearce A.V."/>
            <person name="Peck A.I."/>
            <person name="Pelan S."/>
            <person name="Phelps K."/>
            <person name="Phillimore B.J."/>
            <person name="Plumb R."/>
            <person name="Rajan J."/>
            <person name="Raymond C."/>
            <person name="Rouse G."/>
            <person name="Saenphimmachak C."/>
            <person name="Sehra H.K."/>
            <person name="Sheridan E."/>
            <person name="Shownkeen R."/>
            <person name="Sims S."/>
            <person name="Skuce C.D."/>
            <person name="Smith M."/>
            <person name="Steward C."/>
            <person name="Subramanian S."/>
            <person name="Sycamore N."/>
            <person name="Tracey A."/>
            <person name="Tromans A."/>
            <person name="Van Helmond Z."/>
            <person name="Wall M."/>
            <person name="Wallis J.M."/>
            <person name="White S."/>
            <person name="Whitehead S.L."/>
            <person name="Wilkinson J.E."/>
            <person name="Willey D.L."/>
            <person name="Williams H."/>
            <person name="Wilming L."/>
            <person name="Wray P.W."/>
            <person name="Wu Z."/>
            <person name="Coulson A."/>
            <person name="Vaudin M."/>
            <person name="Sulston J.E."/>
            <person name="Durbin R.M."/>
            <person name="Hubbard T."/>
            <person name="Wooster R."/>
            <person name="Dunham I."/>
            <person name="Carter N.P."/>
            <person name="McVean G."/>
            <person name="Ross M.T."/>
            <person name="Harrow J."/>
            <person name="Olson M.V."/>
            <person name="Beck S."/>
            <person name="Rogers J."/>
            <person name="Bentley D.R."/>
        </authorList>
    </citation>
    <scope>NUCLEOTIDE SEQUENCE [LARGE SCALE GENOMIC DNA]</scope>
</reference>
<reference key="7">
    <citation type="submission" date="2005-09" db="EMBL/GenBank/DDBJ databases">
        <authorList>
            <person name="Mural R.J."/>
            <person name="Istrail S."/>
            <person name="Sutton G.G."/>
            <person name="Florea L."/>
            <person name="Halpern A.L."/>
            <person name="Mobarry C.M."/>
            <person name="Lippert R."/>
            <person name="Walenz B."/>
            <person name="Shatkay H."/>
            <person name="Dew I."/>
            <person name="Miller J.R."/>
            <person name="Flanigan M.J."/>
            <person name="Edwards N.J."/>
            <person name="Bolanos R."/>
            <person name="Fasulo D."/>
            <person name="Halldorsson B.V."/>
            <person name="Hannenhalli S."/>
            <person name="Turner R."/>
            <person name="Yooseph S."/>
            <person name="Lu F."/>
            <person name="Nusskern D.R."/>
            <person name="Shue B.C."/>
            <person name="Zheng X.H."/>
            <person name="Zhong F."/>
            <person name="Delcher A.L."/>
            <person name="Huson D.H."/>
            <person name="Kravitz S.A."/>
            <person name="Mouchard L."/>
            <person name="Reinert K."/>
            <person name="Remington K.A."/>
            <person name="Clark A.G."/>
            <person name="Waterman M.S."/>
            <person name="Eichler E.E."/>
            <person name="Adams M.D."/>
            <person name="Hunkapiller M.W."/>
            <person name="Myers E.W."/>
            <person name="Venter J.C."/>
        </authorList>
    </citation>
    <scope>NUCLEOTIDE SEQUENCE [LARGE SCALE GENOMIC DNA]</scope>
</reference>
<reference key="8">
    <citation type="journal article" date="2004" name="Genome Res.">
        <title>The status, quality, and expansion of the NIH full-length cDNA project: the Mammalian Gene Collection (MGC).</title>
        <authorList>
            <consortium name="The MGC Project Team"/>
        </authorList>
    </citation>
    <scope>NUCLEOTIDE SEQUENCE [LARGE SCALE MRNA]</scope>
</reference>
<reference key="9">
    <citation type="journal article" date="2005" name="Transfusion">
        <title>STAR: a novel high-prevalence antigen in the Scianna blood group system.</title>
        <authorList>
            <person name="Hue-Roye K."/>
            <person name="Chaudhuri A."/>
            <person name="Velliquette R.W."/>
            <person name="Fetics S."/>
            <person name="Thomas R."/>
            <person name="Balk M."/>
            <person name="Wagner F.F."/>
            <person name="Flegel W.A."/>
            <person name="Reid M.E."/>
        </authorList>
    </citation>
    <scope>NUCLEOTIDE SEQUENCE [GENOMIC DNA] OF 30-144</scope>
    <scope>POLYMORPHISM</scope>
    <scope>VARIANT BLOOD GROUP SC5 LYS-47</scope>
</reference>
<reference key="10">
    <citation type="journal article" date="2005" name="Transfusion">
        <title>SCER and SCAN: two novel high-prevalence antigens in the Scianna blood group system.</title>
        <authorList>
            <person name="Flegel W.A."/>
            <person name="Chen Q."/>
            <person name="Reid M.E."/>
            <person name="Martin J."/>
            <person name="Orsini L.A."/>
            <person name="Poole J."/>
            <person name="Moulds M.K."/>
            <person name="Wagner F.F."/>
        </authorList>
    </citation>
    <scope>POLYMORPHISM</scope>
    <scope>VARIANTS SER-35 AND GLN-81</scope>
</reference>
<reference key="11">
    <citation type="journal article" date="2014" name="J. Proteomics">
        <title>An enzyme assisted RP-RPLC approach for in-depth analysis of human liver phosphoproteome.</title>
        <authorList>
            <person name="Bian Y."/>
            <person name="Song C."/>
            <person name="Cheng K."/>
            <person name="Dong M."/>
            <person name="Wang F."/>
            <person name="Huang J."/>
            <person name="Sun D."/>
            <person name="Wang L."/>
            <person name="Ye M."/>
            <person name="Zou H."/>
        </authorList>
    </citation>
    <scope>IDENTIFICATION BY MASS SPECTROMETRY [LARGE SCALE ANALYSIS]</scope>
    <source>
        <tissue>Liver</tissue>
    </source>
</reference>
<comment type="function">
    <text>Possible role as a cell-adhesion or receptor molecule of erythroid cells.</text>
</comment>
<comment type="interaction">
    <interactant intactId="EBI-13361852">
        <id>Q96PL5</id>
    </interactant>
    <interactant intactId="EBI-489887">
        <id>P50402</id>
        <label>EMD</label>
    </interactant>
    <organismsDiffer>false</organismsDiffer>
    <experiments>3</experiments>
</comment>
<comment type="interaction">
    <interactant intactId="EBI-13361852">
        <id>Q96PL5</id>
    </interactant>
    <interactant intactId="EBI-3957694">
        <id>Q9BYR6</id>
        <label>KRTAP3-3</label>
    </interactant>
    <organismsDiffer>false</organismsDiffer>
    <experiments>3</experiments>
</comment>
<comment type="interaction">
    <interactant intactId="EBI-13361852">
        <id>Q96PL5</id>
    </interactant>
    <interactant intactId="EBI-12268900">
        <id>Q68G75</id>
        <label>LEMD1</label>
    </interactant>
    <organismsDiffer>false</organismsDiffer>
    <experiments>3</experiments>
</comment>
<comment type="interaction">
    <interactant intactId="EBI-13361852">
        <id>Q96PL5</id>
    </interactant>
    <interactant intactId="EBI-2800360">
        <id>Q9Y6G1</id>
        <label>TMEM14A</label>
    </interactant>
    <organismsDiffer>false</organismsDiffer>
    <experiments>3</experiments>
</comment>
<comment type="subcellular location">
    <subcellularLocation>
        <location evidence="6">Cell membrane</location>
        <topology evidence="2">Single-pass type I membrane protein</topology>
    </subcellularLocation>
    <subcellularLocation>
        <location evidence="6">Cytoplasm</location>
    </subcellularLocation>
</comment>
<comment type="tissue specificity">
    <text evidence="5 6">Expressed in erythroid-enriched bone marrow (at protein level). Highly expressed in bone marrow and to a lower extent in leukocytes, thymus, lymph node and spleen.</text>
</comment>
<comment type="developmental stage">
    <text evidence="5 6">Expressed in fetal liver blood cells (at protein level). Highly expressed in fetal liver.</text>
</comment>
<comment type="PTM">
    <text>Glycosylated.</text>
</comment>
<comment type="polymorphism">
    <text evidence="7 8 9">ERMAP is responsible for the Scianna/Radin blood group system which comprises seven different antigens (PubMed:12393480). The Sc1 and Sc2 antigens are resulting from a single variation in position 57; Arg-57 corresponds to the Sc2 antigen and Gly-57 to the Sc1 antigen. The Sc2 antigen is rare with an occurrence of less than 1% in the population while Sc1 is more frequent. Sc3 is not expressed by individuals homozygous for a null allele encoding a truncated protein lacking its extracellular part (Sc-3). The Sc4 antigen corresponding to the previously defined Radin blood group antigen (Rd) is due to a single variation in position 60; Ala-60 corresponds to Sc4/Rd(+), the antigenic form of the protein. Sc4 is found in less than 1% of the population. Sc5/STAR, Sc6/SCER and Sc7/SCAN antigens are due to single variations in positions 47, 81 and 35 respectively. Alloantibodies to the low frequency Sc2 and Sc4 antigens are the cause of hemolytic disease in the newborn (PubMed:15660834, PubMed:16371048).</text>
</comment>
<comment type="similarity">
    <text evidence="11">Belongs to the immunoglobulin superfamily. BTN/MOG family.</text>
</comment>
<gene>
    <name type="primary">ERMAP</name>
    <name type="synonym">RD</name>
    <name type="synonym">SC</name>
</gene>
<dbReference type="EMBL" id="AY049028">
    <property type="protein sequence ID" value="AAL11456.1"/>
    <property type="molecule type" value="mRNA"/>
</dbReference>
<dbReference type="EMBL" id="AF311284">
    <property type="protein sequence ID" value="AAL08411.1"/>
    <property type="molecule type" value="mRNA"/>
</dbReference>
<dbReference type="EMBL" id="AF311285">
    <property type="protein sequence ID" value="AAL08412.1"/>
    <property type="molecule type" value="mRNA"/>
</dbReference>
<dbReference type="EMBL" id="AJ505028">
    <property type="protein sequence ID" value="CAD43739.1"/>
    <property type="molecule type" value="Genomic_DNA"/>
</dbReference>
<dbReference type="EMBL" id="AJ505036">
    <property type="protein sequence ID" value="CAD43740.1"/>
    <property type="molecule type" value="Genomic_DNA"/>
</dbReference>
<dbReference type="EMBL" id="AJ505037">
    <property type="protein sequence ID" value="CAD43740.1"/>
    <property type="status" value="JOINED"/>
    <property type="molecule type" value="Genomic_DNA"/>
</dbReference>
<dbReference type="EMBL" id="AJ505038">
    <property type="protein sequence ID" value="CAD43740.1"/>
    <property type="status" value="JOINED"/>
    <property type="molecule type" value="Genomic_DNA"/>
</dbReference>
<dbReference type="EMBL" id="AJ505039">
    <property type="protein sequence ID" value="CAD43740.1"/>
    <property type="status" value="JOINED"/>
    <property type="molecule type" value="Genomic_DNA"/>
</dbReference>
<dbReference type="EMBL" id="AJ505040">
    <property type="protein sequence ID" value="CAD43740.1"/>
    <property type="status" value="JOINED"/>
    <property type="molecule type" value="Genomic_DNA"/>
</dbReference>
<dbReference type="EMBL" id="AJ505041">
    <property type="protein sequence ID" value="CAD43740.1"/>
    <property type="status" value="JOINED"/>
    <property type="molecule type" value="Genomic_DNA"/>
</dbReference>
<dbReference type="EMBL" id="AJ505042">
    <property type="protein sequence ID" value="CAD43740.1"/>
    <property type="status" value="JOINED"/>
    <property type="molecule type" value="Genomic_DNA"/>
</dbReference>
<dbReference type="EMBL" id="AJ505044">
    <property type="protein sequence ID" value="CAD43741.1"/>
    <property type="molecule type" value="Genomic_DNA"/>
</dbReference>
<dbReference type="EMBL" id="AJ505045">
    <property type="protein sequence ID" value="CAD43741.1"/>
    <property type="status" value="JOINED"/>
    <property type="molecule type" value="Genomic_DNA"/>
</dbReference>
<dbReference type="EMBL" id="AJ505046">
    <property type="protein sequence ID" value="CAD43741.1"/>
    <property type="status" value="JOINED"/>
    <property type="molecule type" value="Genomic_DNA"/>
</dbReference>
<dbReference type="EMBL" id="AJ505047">
    <property type="protein sequence ID" value="CAD43741.1"/>
    <property type="status" value="JOINED"/>
    <property type="molecule type" value="Genomic_DNA"/>
</dbReference>
<dbReference type="EMBL" id="AJ505048">
    <property type="protein sequence ID" value="CAD43741.1"/>
    <property type="status" value="JOINED"/>
    <property type="molecule type" value="Genomic_DNA"/>
</dbReference>
<dbReference type="EMBL" id="AJ505049">
    <property type="protein sequence ID" value="CAD43741.1"/>
    <property type="status" value="JOINED"/>
    <property type="molecule type" value="Genomic_DNA"/>
</dbReference>
<dbReference type="EMBL" id="AJ505050">
    <property type="protein sequence ID" value="CAD43741.1"/>
    <property type="status" value="JOINED"/>
    <property type="molecule type" value="Genomic_DNA"/>
</dbReference>
<dbReference type="EMBL" id="BX537371">
    <property type="protein sequence ID" value="CAD97613.2"/>
    <property type="molecule type" value="mRNA"/>
</dbReference>
<dbReference type="EMBL" id="DQ090843">
    <property type="protein sequence ID" value="AAY88736.1"/>
    <property type="molecule type" value="Genomic_DNA"/>
</dbReference>
<dbReference type="EMBL" id="AL512353">
    <property type="status" value="NOT_ANNOTATED_CDS"/>
    <property type="molecule type" value="Genomic_DNA"/>
</dbReference>
<dbReference type="EMBL" id="CH471059">
    <property type="protein sequence ID" value="EAX07130.1"/>
    <property type="molecule type" value="Genomic_DNA"/>
</dbReference>
<dbReference type="EMBL" id="CH471059">
    <property type="protein sequence ID" value="EAX07133.1"/>
    <property type="molecule type" value="Genomic_DNA"/>
</dbReference>
<dbReference type="EMBL" id="BC099703">
    <property type="protein sequence ID" value="AAH99703.1"/>
    <property type="molecule type" value="mRNA"/>
</dbReference>
<dbReference type="EMBL" id="BC099707">
    <property type="protein sequence ID" value="AAH99707.1"/>
    <property type="molecule type" value="mRNA"/>
</dbReference>
<dbReference type="EMBL" id="BC099712">
    <property type="protein sequence ID" value="AAH99712.1"/>
    <property type="molecule type" value="mRNA"/>
</dbReference>
<dbReference type="EMBL" id="BC099713">
    <property type="protein sequence ID" value="AAH99713.1"/>
    <property type="molecule type" value="mRNA"/>
</dbReference>
<dbReference type="EMBL" id="AY644424">
    <property type="protein sequence ID" value="AAT66409.1"/>
    <property type="molecule type" value="Genomic_DNA"/>
</dbReference>
<dbReference type="CCDS" id="CCDS475.1"/>
<dbReference type="RefSeq" id="NP_001017922.1">
    <property type="nucleotide sequence ID" value="NM_001017922.2"/>
</dbReference>
<dbReference type="RefSeq" id="NP_061008.2">
    <property type="nucleotide sequence ID" value="NM_018538.3"/>
</dbReference>
<dbReference type="RefSeq" id="XP_006710376.1">
    <property type="nucleotide sequence ID" value="XM_006710313.5"/>
</dbReference>
<dbReference type="RefSeq" id="XP_011538872.1">
    <property type="nucleotide sequence ID" value="XM_011540570.4"/>
</dbReference>
<dbReference type="RefSeq" id="XP_047299547.1">
    <property type="nucleotide sequence ID" value="XM_047443591.1"/>
</dbReference>
<dbReference type="RefSeq" id="XP_054190060.1">
    <property type="nucleotide sequence ID" value="XM_054334085.1"/>
</dbReference>
<dbReference type="RefSeq" id="XP_054190061.1">
    <property type="nucleotide sequence ID" value="XM_054334086.1"/>
</dbReference>
<dbReference type="RefSeq" id="XP_054190062.1">
    <property type="nucleotide sequence ID" value="XM_054334087.1"/>
</dbReference>
<dbReference type="SMR" id="Q96PL5"/>
<dbReference type="BioGRID" id="125328">
    <property type="interactions" value="28"/>
</dbReference>
<dbReference type="FunCoup" id="Q96PL5">
    <property type="interactions" value="434"/>
</dbReference>
<dbReference type="IntAct" id="Q96PL5">
    <property type="interactions" value="25"/>
</dbReference>
<dbReference type="MINT" id="Q96PL5"/>
<dbReference type="STRING" id="9606.ENSP00000361595"/>
<dbReference type="GlyCosmos" id="Q96PL5">
    <property type="glycosylation" value="1 site, No reported glycans"/>
</dbReference>
<dbReference type="GlyGen" id="Q96PL5">
    <property type="glycosylation" value="1 site, 1 N-linked glycan (1 site)"/>
</dbReference>
<dbReference type="iPTMnet" id="Q96PL5"/>
<dbReference type="PhosphoSitePlus" id="Q96PL5"/>
<dbReference type="BioMuta" id="ERMAP"/>
<dbReference type="DMDM" id="74761033"/>
<dbReference type="jPOST" id="Q96PL5"/>
<dbReference type="MassIVE" id="Q96PL5"/>
<dbReference type="PaxDb" id="9606-ENSP00000361595"/>
<dbReference type="PeptideAtlas" id="Q96PL5"/>
<dbReference type="ProteomicsDB" id="77708"/>
<dbReference type="Pumba" id="Q96PL5"/>
<dbReference type="Antibodypedia" id="18175">
    <property type="antibodies" value="324 antibodies from 28 providers"/>
</dbReference>
<dbReference type="DNASU" id="114625"/>
<dbReference type="Ensembl" id="ENST00000372514.7">
    <property type="protein sequence ID" value="ENSP00000361592.3"/>
    <property type="gene ID" value="ENSG00000164010.15"/>
</dbReference>
<dbReference type="Ensembl" id="ENST00000372517.8">
    <property type="protein sequence ID" value="ENSP00000361595.2"/>
    <property type="gene ID" value="ENSG00000164010.15"/>
</dbReference>
<dbReference type="GeneID" id="114625"/>
<dbReference type="KEGG" id="hsa:114625"/>
<dbReference type="MANE-Select" id="ENST00000372517.8">
    <property type="protein sequence ID" value="ENSP00000361595.2"/>
    <property type="RefSeq nucleotide sequence ID" value="NM_001017922.2"/>
    <property type="RefSeq protein sequence ID" value="NP_001017922.1"/>
</dbReference>
<dbReference type="UCSC" id="uc001cic.2">
    <property type="organism name" value="human"/>
</dbReference>
<dbReference type="AGR" id="HGNC:15743"/>
<dbReference type="CTD" id="114625"/>
<dbReference type="DisGeNET" id="114625"/>
<dbReference type="GeneCards" id="ERMAP"/>
<dbReference type="HGNC" id="HGNC:15743">
    <property type="gene designation" value="ERMAP"/>
</dbReference>
<dbReference type="HPA" id="ENSG00000164010">
    <property type="expression patterns" value="Low tissue specificity"/>
</dbReference>
<dbReference type="MalaCards" id="ERMAP"/>
<dbReference type="MIM" id="111620">
    <property type="type" value="phenotype"/>
</dbReference>
<dbReference type="MIM" id="111750">
    <property type="type" value="phenotype"/>
</dbReference>
<dbReference type="MIM" id="609017">
    <property type="type" value="gene"/>
</dbReference>
<dbReference type="neXtProt" id="NX_Q96PL5"/>
<dbReference type="OpenTargets" id="ENSG00000164010"/>
<dbReference type="PharmGKB" id="PA27860"/>
<dbReference type="VEuPathDB" id="HostDB:ENSG00000164010"/>
<dbReference type="eggNOG" id="KOG2177">
    <property type="taxonomic scope" value="Eukaryota"/>
</dbReference>
<dbReference type="GeneTree" id="ENSGT00940000160531"/>
<dbReference type="InParanoid" id="Q96PL5"/>
<dbReference type="OMA" id="LGDRKQP"/>
<dbReference type="OrthoDB" id="6270329at2759"/>
<dbReference type="PAN-GO" id="Q96PL5">
    <property type="GO annotations" value="4 GO annotations based on evolutionary models"/>
</dbReference>
<dbReference type="PhylomeDB" id="Q96PL5"/>
<dbReference type="TreeFam" id="TF317532"/>
<dbReference type="PathwayCommons" id="Q96PL5"/>
<dbReference type="SignaLink" id="Q96PL5"/>
<dbReference type="SIGNOR" id="Q96PL5"/>
<dbReference type="BioGRID-ORCS" id="114625">
    <property type="hits" value="15 hits in 1151 CRISPR screens"/>
</dbReference>
<dbReference type="ChiTaRS" id="ERMAP">
    <property type="organism name" value="human"/>
</dbReference>
<dbReference type="GeneWiki" id="ERMAP"/>
<dbReference type="GenomeRNAi" id="114625"/>
<dbReference type="Pharos" id="Q96PL5">
    <property type="development level" value="Tbio"/>
</dbReference>
<dbReference type="PRO" id="PR:Q96PL5"/>
<dbReference type="Proteomes" id="UP000005640">
    <property type="component" value="Chromosome 1"/>
</dbReference>
<dbReference type="RNAct" id="Q96PL5">
    <property type="molecule type" value="protein"/>
</dbReference>
<dbReference type="Bgee" id="ENSG00000164010">
    <property type="expression patterns" value="Expressed in monocyte and 124 other cell types or tissues"/>
</dbReference>
<dbReference type="ExpressionAtlas" id="Q96PL5">
    <property type="expression patterns" value="baseline and differential"/>
</dbReference>
<dbReference type="GO" id="GO:0005829">
    <property type="term" value="C:cytosol"/>
    <property type="evidence" value="ECO:0000314"/>
    <property type="project" value="HPA"/>
</dbReference>
<dbReference type="GO" id="GO:0009897">
    <property type="term" value="C:external side of plasma membrane"/>
    <property type="evidence" value="ECO:0000318"/>
    <property type="project" value="GO_Central"/>
</dbReference>
<dbReference type="GO" id="GO:0005794">
    <property type="term" value="C:Golgi apparatus"/>
    <property type="evidence" value="ECO:0000314"/>
    <property type="project" value="HPA"/>
</dbReference>
<dbReference type="GO" id="GO:0005886">
    <property type="term" value="C:plasma membrane"/>
    <property type="evidence" value="ECO:0000314"/>
    <property type="project" value="MGI"/>
</dbReference>
<dbReference type="GO" id="GO:0005102">
    <property type="term" value="F:signaling receptor binding"/>
    <property type="evidence" value="ECO:0000318"/>
    <property type="project" value="GO_Central"/>
</dbReference>
<dbReference type="GO" id="GO:0001817">
    <property type="term" value="P:regulation of cytokine production"/>
    <property type="evidence" value="ECO:0000318"/>
    <property type="project" value="GO_Central"/>
</dbReference>
<dbReference type="GO" id="GO:0050852">
    <property type="term" value="P:T cell receptor signaling pathway"/>
    <property type="evidence" value="ECO:0000318"/>
    <property type="project" value="GO_Central"/>
</dbReference>
<dbReference type="CDD" id="cd15813">
    <property type="entry name" value="SPRY_PRY_TRIM20"/>
    <property type="match status" value="1"/>
</dbReference>
<dbReference type="FunFam" id="2.60.120.920:FF:000004">
    <property type="entry name" value="Butyrophilin subfamily 1 member A1"/>
    <property type="match status" value="1"/>
</dbReference>
<dbReference type="FunFam" id="2.60.40.10:FF:001695">
    <property type="entry name" value="Erythroblast membrane associated protein (Scianna blood group)"/>
    <property type="match status" value="1"/>
</dbReference>
<dbReference type="Gene3D" id="2.60.120.920">
    <property type="match status" value="1"/>
</dbReference>
<dbReference type="Gene3D" id="2.60.40.10">
    <property type="entry name" value="Immunoglobulins"/>
    <property type="match status" value="1"/>
</dbReference>
<dbReference type="InterPro" id="IPR001870">
    <property type="entry name" value="B30.2/SPRY"/>
</dbReference>
<dbReference type="InterPro" id="IPR043136">
    <property type="entry name" value="B30.2/SPRY_sf"/>
</dbReference>
<dbReference type="InterPro" id="IPR003879">
    <property type="entry name" value="Butyrophylin_SPRY"/>
</dbReference>
<dbReference type="InterPro" id="IPR013320">
    <property type="entry name" value="ConA-like_dom_sf"/>
</dbReference>
<dbReference type="InterPro" id="IPR007110">
    <property type="entry name" value="Ig-like_dom"/>
</dbReference>
<dbReference type="InterPro" id="IPR036179">
    <property type="entry name" value="Ig-like_dom_sf"/>
</dbReference>
<dbReference type="InterPro" id="IPR013783">
    <property type="entry name" value="Ig-like_fold"/>
</dbReference>
<dbReference type="InterPro" id="IPR003599">
    <property type="entry name" value="Ig_sub"/>
</dbReference>
<dbReference type="InterPro" id="IPR013106">
    <property type="entry name" value="Ig_V-set"/>
</dbReference>
<dbReference type="InterPro" id="IPR006574">
    <property type="entry name" value="PRY"/>
</dbReference>
<dbReference type="InterPro" id="IPR003877">
    <property type="entry name" value="SPRY_dom"/>
</dbReference>
<dbReference type="InterPro" id="IPR050143">
    <property type="entry name" value="TRIM/RBCC"/>
</dbReference>
<dbReference type="PANTHER" id="PTHR24103">
    <property type="entry name" value="E3 UBIQUITIN-PROTEIN LIGASE TRIM"/>
    <property type="match status" value="1"/>
</dbReference>
<dbReference type="Pfam" id="PF13765">
    <property type="entry name" value="PRY"/>
    <property type="match status" value="1"/>
</dbReference>
<dbReference type="Pfam" id="PF00622">
    <property type="entry name" value="SPRY"/>
    <property type="match status" value="1"/>
</dbReference>
<dbReference type="Pfam" id="PF07686">
    <property type="entry name" value="V-set"/>
    <property type="match status" value="1"/>
</dbReference>
<dbReference type="PRINTS" id="PR01407">
    <property type="entry name" value="BUTYPHLNCDUF"/>
</dbReference>
<dbReference type="SMART" id="SM00409">
    <property type="entry name" value="IG"/>
    <property type="match status" value="1"/>
</dbReference>
<dbReference type="SMART" id="SM00406">
    <property type="entry name" value="IGv"/>
    <property type="match status" value="1"/>
</dbReference>
<dbReference type="SMART" id="SM00589">
    <property type="entry name" value="PRY"/>
    <property type="match status" value="1"/>
</dbReference>
<dbReference type="SMART" id="SM00449">
    <property type="entry name" value="SPRY"/>
    <property type="match status" value="1"/>
</dbReference>
<dbReference type="SUPFAM" id="SSF49899">
    <property type="entry name" value="Concanavalin A-like lectins/glucanases"/>
    <property type="match status" value="1"/>
</dbReference>
<dbReference type="SUPFAM" id="SSF48726">
    <property type="entry name" value="Immunoglobulin"/>
    <property type="match status" value="1"/>
</dbReference>
<dbReference type="PROSITE" id="PS50188">
    <property type="entry name" value="B302_SPRY"/>
    <property type="match status" value="1"/>
</dbReference>
<dbReference type="PROSITE" id="PS50835">
    <property type="entry name" value="IG_LIKE"/>
    <property type="match status" value="1"/>
</dbReference>
<proteinExistence type="evidence at protein level"/>
<sequence length="475" mass="52605">MEMASSAGSWLSGCLIPLVFLRLSVHVSGHAGDAGKFHVALLGGTAELLCPLSLWPGTVPKEVRWLRSPFPQRSQAVHIFRDGKDQDEDLMPEYKGRTVLVRDAQEGSVTLQILDVRLEDQGSYRCLIQVGNLSKEDTVILQVAAPSVGSLSPSAVALAVILPVLVLLIMVCLCLIWKQRRAKEKLLYEHVTEVDNLLSDHAKEKGKLHKAVKKLRSELKLKRAAANSGWRRARLHFVAVTLDPDTAHPKLILSEDQRCVRLGDRRQPVPDNPQRFDFVVSILGSEYFTTGCHYWEVYVGDKTKWILGVCSESVSRKGKVTASPANGHWLLRQSRGNEYEALTSPQTSFRLKEPPRCVGIFLDYEAGVISFYNVTNKSHIFTFTHNFSGPLRPFFEPCLHDGGKNTAPLVICSELHKSEESIVPRPEGKGHANGDVSLKVNSSLLPPKAPELKDIILSLPPDLGPALQELKAPSF</sequence>
<protein>
    <recommendedName>
        <fullName>Erythroid membrane-associated protein</fullName>
        <shortName>hERMAP</shortName>
    </recommendedName>
    <alternativeName>
        <fullName>Radin blood group antigen</fullName>
    </alternativeName>
    <alternativeName>
        <fullName>Scianna blood group antigen</fullName>
    </alternativeName>
</protein>
<organism>
    <name type="scientific">Homo sapiens</name>
    <name type="common">Human</name>
    <dbReference type="NCBI Taxonomy" id="9606"/>
    <lineage>
        <taxon>Eukaryota</taxon>
        <taxon>Metazoa</taxon>
        <taxon>Chordata</taxon>
        <taxon>Craniata</taxon>
        <taxon>Vertebrata</taxon>
        <taxon>Euteleostomi</taxon>
        <taxon>Mammalia</taxon>
        <taxon>Eutheria</taxon>
        <taxon>Euarchontoglires</taxon>
        <taxon>Primates</taxon>
        <taxon>Haplorrhini</taxon>
        <taxon>Catarrhini</taxon>
        <taxon>Hominidae</taxon>
        <taxon>Homo</taxon>
    </lineage>
</organism>
<feature type="signal peptide" evidence="2">
    <location>
        <begin position="1"/>
        <end position="29"/>
    </location>
</feature>
<feature type="chain" id="PRO_0000226088" description="Erythroid membrane-associated protein">
    <location>
        <begin position="30"/>
        <end position="475"/>
    </location>
</feature>
<feature type="topological domain" description="Extracellular" evidence="2">
    <location>
        <begin position="30"/>
        <end position="155"/>
    </location>
</feature>
<feature type="transmembrane region" description="Helical" evidence="2">
    <location>
        <begin position="156"/>
        <end position="176"/>
    </location>
</feature>
<feature type="topological domain" description="Cytoplasmic" evidence="2">
    <location>
        <begin position="177"/>
        <end position="475"/>
    </location>
</feature>
<feature type="domain" description="Ig-like V-type">
    <location>
        <begin position="30"/>
        <end position="140"/>
    </location>
</feature>
<feature type="domain" description="B30.2/SPRY" evidence="4">
    <location>
        <begin position="220"/>
        <end position="418"/>
    </location>
</feature>
<feature type="modified residue" description="Phosphoserine" evidence="1">
    <location>
        <position position="418"/>
    </location>
</feature>
<feature type="glycosylation site" description="N-linked (GlcNAc...) asparagine" evidence="2">
    <location>
        <position position="132"/>
    </location>
</feature>
<feature type="disulfide bond" evidence="3">
    <location>
        <begin position="50"/>
        <end position="126"/>
    </location>
</feature>
<feature type="sequence variant" id="VAR_025478" description="In dbSNP:rs35757049." evidence="10">
    <original>A</original>
    <variation>V</variation>
    <location>
        <position position="4"/>
    </location>
</feature>
<feature type="sequence variant" id="VAR_025479" description="In dbSNP:rs33953680." evidence="7 10">
    <original>H</original>
    <variation>Y</variation>
    <location>
        <position position="26"/>
    </location>
</feature>
<feature type="sequence variant" id="VAR_025480" description="In Sc7 antigen; dbSNP:rs146429994." evidence="9">
    <original>G</original>
    <variation>S</variation>
    <location>
        <position position="35"/>
    </location>
</feature>
<feature type="sequence variant" id="VAR_025481" description="In Sc5 antigen; dbSNP:rs56047316." evidence="8">
    <original>E</original>
    <variation>K</variation>
    <location>
        <position position="47"/>
    </location>
</feature>
<feature type="sequence variant" id="VAR_025482" description="In Sc2 antigen; dbSNP:rs56025238." evidence="7">
    <original>G</original>
    <variation>R</variation>
    <location>
        <position position="57"/>
    </location>
</feature>
<feature type="sequence variant" id="VAR_025483" description="In Sc4 antigen; dbSNP:rs56136737." evidence="7">
    <original>P</original>
    <variation>A</variation>
    <location>
        <position position="60"/>
    </location>
</feature>
<feature type="sequence variant" id="VAR_025484" description="In Sc6 antigen; dbSNP:rs368064875." evidence="9">
    <original>R</original>
    <variation>Q</variation>
    <location>
        <position position="81"/>
    </location>
</feature>
<feature type="sequence variant" id="VAR_025485" description="In Sc-3 allele.">
    <original>DAQEGSVTLQI</original>
    <variation>CPRGKCHSADP</variation>
    <location>
        <begin position="103"/>
        <end position="113"/>
    </location>
</feature>
<feature type="sequence variant" id="VAR_025486" description="In Sc-3 allele.">
    <location>
        <begin position="114"/>
        <end position="475"/>
    </location>
</feature>
<feature type="sequence variant" id="VAR_025487" description="In dbSNP:rs35147822." evidence="10">
    <original>C</original>
    <variation>R</variation>
    <location>
        <position position="259"/>
    </location>
</feature>
<feature type="sequence variant" id="VAR_025488" description="In dbSNP:rs34441268." evidence="10">
    <original>G</original>
    <variation>E</variation>
    <location>
        <position position="263"/>
    </location>
</feature>
<feature type="sequence conflict" description="In Ref. 4; CAD97613." evidence="11" ref="4">
    <original>L</original>
    <variation>P</variation>
    <location>
        <position position="452"/>
    </location>
</feature>
<evidence type="ECO:0000250" key="1">
    <source>
        <dbReference type="UniProtKB" id="Q9JLN5"/>
    </source>
</evidence>
<evidence type="ECO:0000255" key="2"/>
<evidence type="ECO:0000255" key="3">
    <source>
        <dbReference type="PROSITE-ProRule" id="PRU00114"/>
    </source>
</evidence>
<evidence type="ECO:0000255" key="4">
    <source>
        <dbReference type="PROSITE-ProRule" id="PRU00548"/>
    </source>
</evidence>
<evidence type="ECO:0000269" key="5">
    <source>
    </source>
</evidence>
<evidence type="ECO:0000269" key="6">
    <source>
    </source>
</evidence>
<evidence type="ECO:0000269" key="7">
    <source>
    </source>
</evidence>
<evidence type="ECO:0000269" key="8">
    <source>
    </source>
</evidence>
<evidence type="ECO:0000269" key="9">
    <source>
    </source>
</evidence>
<evidence type="ECO:0000269" key="10">
    <source ref="5"/>
</evidence>
<evidence type="ECO:0000305" key="11"/>
<accession>Q96PL5</accession>
<accession>D3DPW8</accession>
<accession>Q5VV53</accession>
<accession>Q6DUE0</accession>
<accession>Q7Z3X0</accession>
<accession>Q8NCV8</accession>
<accession>Q8NCW2</accession>
<accession>Q8NCW3</accession>
<accession>Q96PL6</accession>